<organism>
    <name type="scientific">Vibrio vulnificus (strain YJ016)</name>
    <dbReference type="NCBI Taxonomy" id="196600"/>
    <lineage>
        <taxon>Bacteria</taxon>
        <taxon>Pseudomonadati</taxon>
        <taxon>Pseudomonadota</taxon>
        <taxon>Gammaproteobacteria</taxon>
        <taxon>Vibrionales</taxon>
        <taxon>Vibrionaceae</taxon>
        <taxon>Vibrio</taxon>
    </lineage>
</organism>
<dbReference type="EMBL" id="BA000037">
    <property type="protein sequence ID" value="BAC95333.1"/>
    <property type="molecule type" value="Genomic_DNA"/>
</dbReference>
<dbReference type="SMR" id="Q7MIE8"/>
<dbReference type="KEGG" id="vvy:VV2569"/>
<dbReference type="PATRIC" id="fig|196600.6.peg.2574"/>
<dbReference type="HOGENOM" id="CLU_135723_3_2_6"/>
<dbReference type="Proteomes" id="UP000002675">
    <property type="component" value="Chromosome I"/>
</dbReference>
<dbReference type="GO" id="GO:1990904">
    <property type="term" value="C:ribonucleoprotein complex"/>
    <property type="evidence" value="ECO:0007669"/>
    <property type="project" value="UniProtKB-KW"/>
</dbReference>
<dbReference type="GO" id="GO:0005840">
    <property type="term" value="C:ribosome"/>
    <property type="evidence" value="ECO:0007669"/>
    <property type="project" value="UniProtKB-KW"/>
</dbReference>
<dbReference type="GO" id="GO:0003735">
    <property type="term" value="F:structural constituent of ribosome"/>
    <property type="evidence" value="ECO:0007669"/>
    <property type="project" value="InterPro"/>
</dbReference>
<dbReference type="GO" id="GO:0006412">
    <property type="term" value="P:translation"/>
    <property type="evidence" value="ECO:0007669"/>
    <property type="project" value="UniProtKB-UniRule"/>
</dbReference>
<dbReference type="HAMAP" id="MF_00251">
    <property type="entry name" value="Ribosomal_bL36"/>
    <property type="match status" value="1"/>
</dbReference>
<dbReference type="InterPro" id="IPR000473">
    <property type="entry name" value="Ribosomal_bL36"/>
</dbReference>
<dbReference type="InterPro" id="IPR035977">
    <property type="entry name" value="Ribosomal_bL36_sp"/>
</dbReference>
<dbReference type="InterPro" id="IPR047621">
    <property type="entry name" value="Ribosomal_L36_bact"/>
</dbReference>
<dbReference type="NCBIfam" id="NF002021">
    <property type="entry name" value="PRK00831.1"/>
    <property type="match status" value="1"/>
</dbReference>
<dbReference type="NCBIfam" id="TIGR01022">
    <property type="entry name" value="rpmJ_bact"/>
    <property type="match status" value="1"/>
</dbReference>
<dbReference type="PANTHER" id="PTHR47781">
    <property type="entry name" value="50S RIBOSOMAL PROTEIN L36 2"/>
    <property type="match status" value="1"/>
</dbReference>
<dbReference type="PANTHER" id="PTHR47781:SF1">
    <property type="entry name" value="LARGE RIBOSOMAL SUBUNIT PROTEIN BL36B"/>
    <property type="match status" value="1"/>
</dbReference>
<dbReference type="Pfam" id="PF00444">
    <property type="entry name" value="Ribosomal_L36"/>
    <property type="match status" value="1"/>
</dbReference>
<dbReference type="SUPFAM" id="SSF57840">
    <property type="entry name" value="Ribosomal protein L36"/>
    <property type="match status" value="1"/>
</dbReference>
<dbReference type="PROSITE" id="PS00828">
    <property type="entry name" value="RIBOSOMAL_L36"/>
    <property type="match status" value="1"/>
</dbReference>
<feature type="chain" id="PRO_0000126295" description="Large ribosomal subunit protein bL36">
    <location>
        <begin position="1"/>
        <end position="41"/>
    </location>
</feature>
<keyword id="KW-0687">Ribonucleoprotein</keyword>
<keyword id="KW-0689">Ribosomal protein</keyword>
<accession>Q7MIE8</accession>
<evidence type="ECO:0000255" key="1">
    <source>
        <dbReference type="HAMAP-Rule" id="MF_00251"/>
    </source>
</evidence>
<evidence type="ECO:0000305" key="2"/>
<comment type="similarity">
    <text evidence="1">Belongs to the bacterial ribosomal protein bL36 family.</text>
</comment>
<name>RL36_VIBVY</name>
<reference key="1">
    <citation type="journal article" date="2003" name="Genome Res.">
        <title>Comparative genome analysis of Vibrio vulnificus, a marine pathogen.</title>
        <authorList>
            <person name="Chen C.-Y."/>
            <person name="Wu K.-M."/>
            <person name="Chang Y.-C."/>
            <person name="Chang C.-H."/>
            <person name="Tsai H.-C."/>
            <person name="Liao T.-L."/>
            <person name="Liu Y.-M."/>
            <person name="Chen H.-J."/>
            <person name="Shen A.B.-T."/>
            <person name="Li J.-C."/>
            <person name="Su T.-L."/>
            <person name="Shao C.-P."/>
            <person name="Lee C.-T."/>
            <person name="Hor L.-I."/>
            <person name="Tsai S.-F."/>
        </authorList>
    </citation>
    <scope>NUCLEOTIDE SEQUENCE [LARGE SCALE GENOMIC DNA]</scope>
    <source>
        <strain>YJ016</strain>
    </source>
</reference>
<gene>
    <name evidence="1" type="primary">rpmJ</name>
    <name type="ordered locus">VV2569</name>
</gene>
<proteinExistence type="inferred from homology"/>
<protein>
    <recommendedName>
        <fullName evidence="1">Large ribosomal subunit protein bL36</fullName>
    </recommendedName>
    <alternativeName>
        <fullName evidence="2">50S ribosomal protein L36</fullName>
    </alternativeName>
</protein>
<sequence length="41" mass="4811">MKVLKSLKSAKARHPDCQIVRRRGRLYVICKSNPRFKAVQK</sequence>